<accession>D2Y2C7</accession>
<sequence>MTTVGVSLFRRSPEKITMKIAAFLGLSFLLIASYVLICEAQHPGFQELLILEENMRDPENSKERSCAKPRENCNRMNILCCRGECVCPTFGDCFCYGD</sequence>
<evidence type="ECO:0000250" key="1"/>
<evidence type="ECO:0000255" key="2"/>
<evidence type="ECO:0000269" key="3">
    <source>
    </source>
</evidence>
<protein>
    <recommendedName>
        <fullName>Hainantoxin-XVII.2</fullName>
        <shortName>HNTX-XVII.2</shortName>
    </recommendedName>
    <alternativeName>
        <fullName>Peptide F2-20.97</fullName>
    </alternativeName>
</protein>
<dbReference type="EMBL" id="GU293004">
    <property type="protein sequence ID" value="ADB56820.1"/>
    <property type="molecule type" value="mRNA"/>
</dbReference>
<dbReference type="ArachnoServer" id="AS001987">
    <property type="toxin name" value="U12-theraphotoxin-Hhn1a"/>
</dbReference>
<dbReference type="GO" id="GO:0005576">
    <property type="term" value="C:extracellular region"/>
    <property type="evidence" value="ECO:0007669"/>
    <property type="project" value="UniProtKB-SubCell"/>
</dbReference>
<dbReference type="GO" id="GO:0099106">
    <property type="term" value="F:ion channel regulator activity"/>
    <property type="evidence" value="ECO:0007669"/>
    <property type="project" value="UniProtKB-KW"/>
</dbReference>
<dbReference type="GO" id="GO:0090729">
    <property type="term" value="F:toxin activity"/>
    <property type="evidence" value="ECO:0007669"/>
    <property type="project" value="UniProtKB-KW"/>
</dbReference>
<comment type="function">
    <text>Putative ion channel inhibitor.</text>
</comment>
<comment type="subcellular location">
    <subcellularLocation>
        <location>Secreted</location>
    </subcellularLocation>
</comment>
<comment type="tissue specificity">
    <text>Expressed by the venom gland.</text>
</comment>
<comment type="domain">
    <text evidence="1">The presence of a 'disulfide through disulfide knot' structurally defines this protein as a knottin.</text>
</comment>
<comment type="similarity">
    <text>Belongs to the hainantoxin family. 17 subfamily.</text>
</comment>
<proteinExistence type="evidence at protein level"/>
<name>H17A2_CYRHA</name>
<keyword id="KW-0903">Direct protein sequencing</keyword>
<keyword id="KW-1015">Disulfide bond</keyword>
<keyword id="KW-0872">Ion channel impairing toxin</keyword>
<keyword id="KW-0960">Knottin</keyword>
<keyword id="KW-0964">Secreted</keyword>
<keyword id="KW-0732">Signal</keyword>
<keyword id="KW-0800">Toxin</keyword>
<organism>
    <name type="scientific">Cyriopagopus hainanus</name>
    <name type="common">Chinese bird spider</name>
    <name type="synonym">Haplopelma hainanum</name>
    <dbReference type="NCBI Taxonomy" id="209901"/>
    <lineage>
        <taxon>Eukaryota</taxon>
        <taxon>Metazoa</taxon>
        <taxon>Ecdysozoa</taxon>
        <taxon>Arthropoda</taxon>
        <taxon>Chelicerata</taxon>
        <taxon>Arachnida</taxon>
        <taxon>Araneae</taxon>
        <taxon>Mygalomorphae</taxon>
        <taxon>Theraphosidae</taxon>
        <taxon>Haplopelma</taxon>
    </lineage>
</organism>
<reference key="1">
    <citation type="journal article" date="2010" name="J. Proteome Res.">
        <title>Molecular diversification of peptide toxins from the tarantula Haplopelma hainanum (Ornithoctonus hainana) venom based on transcriptomic, peptidomic, and genomic analyses.</title>
        <authorList>
            <person name="Tang X."/>
            <person name="Zhang Y."/>
            <person name="Hu W."/>
            <person name="Xu D."/>
            <person name="Tao H."/>
            <person name="Yang X."/>
            <person name="Li Y."/>
            <person name="Jiang L."/>
            <person name="Liang S."/>
        </authorList>
    </citation>
    <scope>NUCLEOTIDE SEQUENCE [LARGE SCALE MRNA]</scope>
    <scope>PROTEIN SEQUENCE OF 65-98</scope>
    <scope>IDENTIFICATION BY MASS SPECTROMETRY</scope>
    <source>
        <tissue>Venom</tissue>
        <tissue>Venom gland</tissue>
    </source>
</reference>
<feature type="signal peptide" evidence="2">
    <location>
        <begin position="1"/>
        <end position="40"/>
    </location>
</feature>
<feature type="propeptide" id="PRO_0000401029" evidence="3">
    <location>
        <begin position="41"/>
        <end position="64"/>
    </location>
</feature>
<feature type="peptide" id="PRO_0000401030" description="Hainantoxin-XVII.2">
    <location>
        <begin position="65"/>
        <end position="98"/>
    </location>
</feature>
<feature type="disulfide bond" evidence="1">
    <location>
        <begin position="66"/>
        <end position="81"/>
    </location>
</feature>
<feature type="disulfide bond" evidence="1">
    <location>
        <begin position="73"/>
        <end position="85"/>
    </location>
</feature>
<feature type="disulfide bond" evidence="1">
    <location>
        <begin position="80"/>
        <end position="95"/>
    </location>
</feature>